<protein>
    <recommendedName>
        <fullName evidence="3">LHFPL tetraspan subfamily member 3 protein</fullName>
    </recommendedName>
    <alternativeName>
        <fullName evidence="3">Lipoma HMGIC fusion partner-like 3 protein</fullName>
    </alternativeName>
</protein>
<name>LHPL3_HUMAN</name>
<gene>
    <name evidence="3" type="primary">LHFPL3</name>
    <name evidence="3" type="synonym">LHFPL4</name>
</gene>
<reference key="1">
    <citation type="submission" date="2003-03" db="EMBL/GenBank/DDBJ databases">
        <authorList>
            <person name="Huang C.Q."/>
            <person name="Wu S.L."/>
            <person name="Liu S."/>
            <person name="Shan Y.X."/>
            <person name="Xiao P.J."/>
        </authorList>
    </citation>
    <scope>NUCLEOTIDE SEQUENCE [LARGE SCALE MRNA]</scope>
</reference>
<reference key="2">
    <citation type="journal article" date="2004" name="Nat. Genet.">
        <title>Complete sequencing and characterization of 21,243 full-length human cDNAs.</title>
        <authorList>
            <person name="Ota T."/>
            <person name="Suzuki Y."/>
            <person name="Nishikawa T."/>
            <person name="Otsuki T."/>
            <person name="Sugiyama T."/>
            <person name="Irie R."/>
            <person name="Wakamatsu A."/>
            <person name="Hayashi K."/>
            <person name="Sato H."/>
            <person name="Nagai K."/>
            <person name="Kimura K."/>
            <person name="Makita H."/>
            <person name="Sekine M."/>
            <person name="Obayashi M."/>
            <person name="Nishi T."/>
            <person name="Shibahara T."/>
            <person name="Tanaka T."/>
            <person name="Ishii S."/>
            <person name="Yamamoto J."/>
            <person name="Saito K."/>
            <person name="Kawai Y."/>
            <person name="Isono Y."/>
            <person name="Nakamura Y."/>
            <person name="Nagahari K."/>
            <person name="Murakami K."/>
            <person name="Yasuda T."/>
            <person name="Iwayanagi T."/>
            <person name="Wagatsuma M."/>
            <person name="Shiratori A."/>
            <person name="Sudo H."/>
            <person name="Hosoiri T."/>
            <person name="Kaku Y."/>
            <person name="Kodaira H."/>
            <person name="Kondo H."/>
            <person name="Sugawara M."/>
            <person name="Takahashi M."/>
            <person name="Kanda K."/>
            <person name="Yokoi T."/>
            <person name="Furuya T."/>
            <person name="Kikkawa E."/>
            <person name="Omura Y."/>
            <person name="Abe K."/>
            <person name="Kamihara K."/>
            <person name="Katsuta N."/>
            <person name="Sato K."/>
            <person name="Tanikawa M."/>
            <person name="Yamazaki M."/>
            <person name="Ninomiya K."/>
            <person name="Ishibashi T."/>
            <person name="Yamashita H."/>
            <person name="Murakawa K."/>
            <person name="Fujimori K."/>
            <person name="Tanai H."/>
            <person name="Kimata M."/>
            <person name="Watanabe M."/>
            <person name="Hiraoka S."/>
            <person name="Chiba Y."/>
            <person name="Ishida S."/>
            <person name="Ono Y."/>
            <person name="Takiguchi S."/>
            <person name="Watanabe S."/>
            <person name="Yosida M."/>
            <person name="Hotuta T."/>
            <person name="Kusano J."/>
            <person name="Kanehori K."/>
            <person name="Takahashi-Fujii A."/>
            <person name="Hara H."/>
            <person name="Tanase T.-O."/>
            <person name="Nomura Y."/>
            <person name="Togiya S."/>
            <person name="Komai F."/>
            <person name="Hara R."/>
            <person name="Takeuchi K."/>
            <person name="Arita M."/>
            <person name="Imose N."/>
            <person name="Musashino K."/>
            <person name="Yuuki H."/>
            <person name="Oshima A."/>
            <person name="Sasaki N."/>
            <person name="Aotsuka S."/>
            <person name="Yoshikawa Y."/>
            <person name="Matsunawa H."/>
            <person name="Ichihara T."/>
            <person name="Shiohata N."/>
            <person name="Sano S."/>
            <person name="Moriya S."/>
            <person name="Momiyama H."/>
            <person name="Satoh N."/>
            <person name="Takami S."/>
            <person name="Terashima Y."/>
            <person name="Suzuki O."/>
            <person name="Nakagawa S."/>
            <person name="Senoh A."/>
            <person name="Mizoguchi H."/>
            <person name="Goto Y."/>
            <person name="Shimizu F."/>
            <person name="Wakebe H."/>
            <person name="Hishigaki H."/>
            <person name="Watanabe T."/>
            <person name="Sugiyama A."/>
            <person name="Takemoto M."/>
            <person name="Kawakami B."/>
            <person name="Yamazaki M."/>
            <person name="Watanabe K."/>
            <person name="Kumagai A."/>
            <person name="Itakura S."/>
            <person name="Fukuzumi Y."/>
            <person name="Fujimori Y."/>
            <person name="Komiyama M."/>
            <person name="Tashiro H."/>
            <person name="Tanigami A."/>
            <person name="Fujiwara T."/>
            <person name="Ono T."/>
            <person name="Yamada K."/>
            <person name="Fujii Y."/>
            <person name="Ozaki K."/>
            <person name="Hirao M."/>
            <person name="Ohmori Y."/>
            <person name="Kawabata A."/>
            <person name="Hikiji T."/>
            <person name="Kobatake N."/>
            <person name="Inagaki H."/>
            <person name="Ikema Y."/>
            <person name="Okamoto S."/>
            <person name="Okitani R."/>
            <person name="Kawakami T."/>
            <person name="Noguchi S."/>
            <person name="Itoh T."/>
            <person name="Shigeta K."/>
            <person name="Senba T."/>
            <person name="Matsumura K."/>
            <person name="Nakajima Y."/>
            <person name="Mizuno T."/>
            <person name="Morinaga M."/>
            <person name="Sasaki M."/>
            <person name="Togashi T."/>
            <person name="Oyama M."/>
            <person name="Hata H."/>
            <person name="Watanabe M."/>
            <person name="Komatsu T."/>
            <person name="Mizushima-Sugano J."/>
            <person name="Satoh T."/>
            <person name="Shirai Y."/>
            <person name="Takahashi Y."/>
            <person name="Nakagawa K."/>
            <person name="Okumura K."/>
            <person name="Nagase T."/>
            <person name="Nomura N."/>
            <person name="Kikuchi H."/>
            <person name="Masuho Y."/>
            <person name="Yamashita R."/>
            <person name="Nakai K."/>
            <person name="Yada T."/>
            <person name="Nakamura Y."/>
            <person name="Ohara O."/>
            <person name="Isogai T."/>
            <person name="Sugano S."/>
        </authorList>
    </citation>
    <scope>NUCLEOTIDE SEQUENCE [LARGE SCALE MRNA]</scope>
    <source>
        <tissue>Brain</tissue>
    </source>
</reference>
<reference key="3">
    <citation type="journal article" date="2003" name="Science">
        <title>Human chromosome 7: DNA sequence and biology.</title>
        <authorList>
            <person name="Scherer S.W."/>
            <person name="Cheung J."/>
            <person name="MacDonald J.R."/>
            <person name="Osborne L.R."/>
            <person name="Nakabayashi K."/>
            <person name="Herbrick J.-A."/>
            <person name="Carson A.R."/>
            <person name="Parker-Katiraee L."/>
            <person name="Skaug J."/>
            <person name="Khaja R."/>
            <person name="Zhang J."/>
            <person name="Hudek A.K."/>
            <person name="Li M."/>
            <person name="Haddad M."/>
            <person name="Duggan G.E."/>
            <person name="Fernandez B.A."/>
            <person name="Kanematsu E."/>
            <person name="Gentles S."/>
            <person name="Christopoulos C.C."/>
            <person name="Choufani S."/>
            <person name="Kwasnicka D."/>
            <person name="Zheng X.H."/>
            <person name="Lai Z."/>
            <person name="Nusskern D.R."/>
            <person name="Zhang Q."/>
            <person name="Gu Z."/>
            <person name="Lu F."/>
            <person name="Zeesman S."/>
            <person name="Nowaczyk M.J."/>
            <person name="Teshima I."/>
            <person name="Chitayat D."/>
            <person name="Shuman C."/>
            <person name="Weksberg R."/>
            <person name="Zackai E.H."/>
            <person name="Grebe T.A."/>
            <person name="Cox S.R."/>
            <person name="Kirkpatrick S.J."/>
            <person name="Rahman N."/>
            <person name="Friedman J.M."/>
            <person name="Heng H.H.Q."/>
            <person name="Pelicci P.G."/>
            <person name="Lo-Coco F."/>
            <person name="Belloni E."/>
            <person name="Shaffer L.G."/>
            <person name="Pober B."/>
            <person name="Morton C.C."/>
            <person name="Gusella J.F."/>
            <person name="Bruns G.A.P."/>
            <person name="Korf B.R."/>
            <person name="Quade B.J."/>
            <person name="Ligon A.H."/>
            <person name="Ferguson H."/>
            <person name="Higgins A.W."/>
            <person name="Leach N.T."/>
            <person name="Herrick S.R."/>
            <person name="Lemyre E."/>
            <person name="Farra C.G."/>
            <person name="Kim H.-G."/>
            <person name="Summers A.M."/>
            <person name="Gripp K.W."/>
            <person name="Roberts W."/>
            <person name="Szatmari P."/>
            <person name="Winsor E.J.T."/>
            <person name="Grzeschik K.-H."/>
            <person name="Teebi A."/>
            <person name="Minassian B.A."/>
            <person name="Kere J."/>
            <person name="Armengol L."/>
            <person name="Pujana M.A."/>
            <person name="Estivill X."/>
            <person name="Wilson M.D."/>
            <person name="Koop B.F."/>
            <person name="Tosi S."/>
            <person name="Moore G.E."/>
            <person name="Boright A.P."/>
            <person name="Zlotorynski E."/>
            <person name="Kerem B."/>
            <person name="Kroisel P.M."/>
            <person name="Petek E."/>
            <person name="Oscier D.G."/>
            <person name="Mould S.J."/>
            <person name="Doehner H."/>
            <person name="Doehner K."/>
            <person name="Rommens J.M."/>
            <person name="Vincent J.B."/>
            <person name="Venter J.C."/>
            <person name="Li P.W."/>
            <person name="Mural R.J."/>
            <person name="Adams M.D."/>
            <person name="Tsui L.-C."/>
        </authorList>
    </citation>
    <scope>NUCLEOTIDE SEQUENCE [LARGE SCALE GENOMIC DNA]</scope>
</reference>
<reference key="4">
    <citation type="journal article" date="2004" name="Genome Res.">
        <title>The status, quality, and expansion of the NIH full-length cDNA project: the Mammalian Gene Collection (MGC).</title>
        <authorList>
            <consortium name="The MGC Project Team"/>
        </authorList>
    </citation>
    <scope>NUCLEOTIDE SEQUENCE [LARGE SCALE MRNA]</scope>
</reference>
<keyword id="KW-0472">Membrane</keyword>
<keyword id="KW-1267">Proteomics identification</keyword>
<keyword id="KW-1185">Reference proteome</keyword>
<keyword id="KW-0812">Transmembrane</keyword>
<keyword id="KW-1133">Transmembrane helix</keyword>
<feature type="chain" id="PRO_0000244766" description="LHFPL tetraspan subfamily member 3 protein">
    <location>
        <begin position="1"/>
        <end position="236"/>
    </location>
</feature>
<feature type="transmembrane region" description="Helical" evidence="1">
    <location>
        <begin position="36"/>
        <end position="56"/>
    </location>
</feature>
<feature type="transmembrane region" description="Helical" evidence="1">
    <location>
        <begin position="110"/>
        <end position="130"/>
    </location>
</feature>
<feature type="transmembrane region" description="Helical" evidence="1">
    <location>
        <begin position="140"/>
        <end position="160"/>
    </location>
</feature>
<feature type="transmembrane region" description="Helical" evidence="1">
    <location>
        <begin position="191"/>
        <end position="211"/>
    </location>
</feature>
<feature type="sequence conflict" description="In Ref. 4; AAI29938." evidence="2" ref="4">
    <original>A</original>
    <variation>T</variation>
    <location>
        <position position="18"/>
    </location>
</feature>
<proteinExistence type="evidence at protein level"/>
<evidence type="ECO:0000255" key="1"/>
<evidence type="ECO:0000305" key="2"/>
<evidence type="ECO:0000312" key="3">
    <source>
        <dbReference type="HGNC" id="HGNC:6589"/>
    </source>
</evidence>
<comment type="interaction">
    <interactant intactId="EBI-12925734">
        <id>Q86UP9</id>
    </interactant>
    <interactant intactId="EBI-17630288">
        <id>P57054</id>
        <label>PIGP</label>
    </interactant>
    <organismsDiffer>false</organismsDiffer>
    <experiments>3</experiments>
</comment>
<comment type="interaction">
    <interactant intactId="EBI-12925734">
        <id>Q86UP9</id>
    </interactant>
    <interactant intactId="EBI-13044680">
        <id>Q9Y225-2</id>
        <label>RNF24</label>
    </interactant>
    <organismsDiffer>false</organismsDiffer>
    <experiments>3</experiments>
</comment>
<comment type="interaction">
    <interactant intactId="EBI-12925734">
        <id>Q86UP9</id>
    </interactant>
    <interactant intactId="EBI-524131">
        <id>O43557</id>
        <label>TNFSF14</label>
    </interactant>
    <organismsDiffer>false</organismsDiffer>
    <experiments>3</experiments>
</comment>
<comment type="subcellular location">
    <subcellularLocation>
        <location evidence="2">Membrane</location>
        <topology evidence="2">Multi-pass membrane protein</topology>
    </subcellularLocation>
</comment>
<comment type="similarity">
    <text evidence="2">Belongs to the LHFP family.</text>
</comment>
<dbReference type="EMBL" id="AY260763">
    <property type="protein sequence ID" value="AAP14954.1"/>
    <property type="molecule type" value="mRNA"/>
</dbReference>
<dbReference type="EMBL" id="AK299759">
    <property type="protein sequence ID" value="BAG61648.1"/>
    <property type="molecule type" value="mRNA"/>
</dbReference>
<dbReference type="EMBL" id="CH236947">
    <property type="protein sequence ID" value="EAL24407.1"/>
    <property type="molecule type" value="Genomic_DNA"/>
</dbReference>
<dbReference type="EMBL" id="BC129937">
    <property type="protein sequence ID" value="AAI29938.1"/>
    <property type="molecule type" value="mRNA"/>
</dbReference>
<dbReference type="CCDS" id="CCDS94168.1"/>
<dbReference type="RefSeq" id="NP_945351.1">
    <property type="nucleotide sequence ID" value="NM_199000.3"/>
</dbReference>
<dbReference type="SMR" id="Q86UP9"/>
<dbReference type="BioGRID" id="131989">
    <property type="interactions" value="3"/>
</dbReference>
<dbReference type="FunCoup" id="Q86UP9">
    <property type="interactions" value="578"/>
</dbReference>
<dbReference type="IntAct" id="Q86UP9">
    <property type="interactions" value="3"/>
</dbReference>
<dbReference type="STRING" id="9606.ENSP00000393128"/>
<dbReference type="iPTMnet" id="Q86UP9"/>
<dbReference type="PhosphoSitePlus" id="Q86UP9"/>
<dbReference type="BioMuta" id="LHFPL3"/>
<dbReference type="DMDM" id="109892510"/>
<dbReference type="MassIVE" id="Q86UP9"/>
<dbReference type="PaxDb" id="9606-ENSP00000393128"/>
<dbReference type="PeptideAtlas" id="Q86UP9"/>
<dbReference type="ProteomicsDB" id="69857"/>
<dbReference type="Antibodypedia" id="55169">
    <property type="antibodies" value="53 antibodies from 14 providers"/>
</dbReference>
<dbReference type="DNASU" id="375612"/>
<dbReference type="Ensembl" id="ENST00000424859.7">
    <property type="protein sequence ID" value="ENSP00000393128.2"/>
    <property type="gene ID" value="ENSG00000187416.13"/>
</dbReference>
<dbReference type="GeneID" id="375612"/>
<dbReference type="KEGG" id="hsa:375612"/>
<dbReference type="MANE-Select" id="ENST00000424859.7">
    <property type="protein sequence ID" value="ENSP00000393128.2"/>
    <property type="RefSeq nucleotide sequence ID" value="NM_199000.3"/>
    <property type="RefSeq protein sequence ID" value="NP_945351.1"/>
</dbReference>
<dbReference type="UCSC" id="uc064gsi.1">
    <property type="organism name" value="human"/>
</dbReference>
<dbReference type="AGR" id="HGNC:6589"/>
<dbReference type="CTD" id="375612"/>
<dbReference type="DisGeNET" id="375612"/>
<dbReference type="GeneCards" id="LHFPL3"/>
<dbReference type="HGNC" id="HGNC:6589">
    <property type="gene designation" value="LHFPL3"/>
</dbReference>
<dbReference type="HPA" id="ENSG00000187416">
    <property type="expression patterns" value="Group enriched (brain, retina)"/>
</dbReference>
<dbReference type="MIM" id="609719">
    <property type="type" value="gene"/>
</dbReference>
<dbReference type="neXtProt" id="NX_Q86UP9"/>
<dbReference type="OpenTargets" id="ENSG00000187416"/>
<dbReference type="PharmGKB" id="PA30361"/>
<dbReference type="VEuPathDB" id="HostDB:ENSG00000187416"/>
<dbReference type="eggNOG" id="KOG4026">
    <property type="taxonomic scope" value="Eukaryota"/>
</dbReference>
<dbReference type="GeneTree" id="ENSGT00990000203541"/>
<dbReference type="InParanoid" id="Q86UP9"/>
<dbReference type="OrthoDB" id="5873721at2759"/>
<dbReference type="PAN-GO" id="Q86UP9">
    <property type="GO annotations" value="2 GO annotations based on evolutionary models"/>
</dbReference>
<dbReference type="PathwayCommons" id="Q86UP9"/>
<dbReference type="SignaLink" id="Q86UP9"/>
<dbReference type="BioGRID-ORCS" id="375612">
    <property type="hits" value="12 hits in 377 CRISPR screens"/>
</dbReference>
<dbReference type="ChiTaRS" id="LHFPL3">
    <property type="organism name" value="human"/>
</dbReference>
<dbReference type="GenomeRNAi" id="375612"/>
<dbReference type="Pharos" id="Q86UP9">
    <property type="development level" value="Tbio"/>
</dbReference>
<dbReference type="PRO" id="PR:Q86UP9"/>
<dbReference type="Proteomes" id="UP000005640">
    <property type="component" value="Chromosome 7"/>
</dbReference>
<dbReference type="RNAct" id="Q86UP9">
    <property type="molecule type" value="protein"/>
</dbReference>
<dbReference type="Bgee" id="ENSG00000187416">
    <property type="expression patterns" value="Expressed in lateral nuclear group of thalamus and 93 other cell types or tissues"/>
</dbReference>
<dbReference type="ExpressionAtlas" id="Q86UP9">
    <property type="expression patterns" value="baseline and differential"/>
</dbReference>
<dbReference type="GO" id="GO:0005886">
    <property type="term" value="C:plasma membrane"/>
    <property type="evidence" value="ECO:0000318"/>
    <property type="project" value="GO_Central"/>
</dbReference>
<dbReference type="GO" id="GO:0007605">
    <property type="term" value="P:sensory perception of sound"/>
    <property type="evidence" value="ECO:0000318"/>
    <property type="project" value="GO_Central"/>
</dbReference>
<dbReference type="InterPro" id="IPR019372">
    <property type="entry name" value="LHFPL"/>
</dbReference>
<dbReference type="PANTHER" id="PTHR12489:SF13">
    <property type="entry name" value="LHFPL TETRASPAN SUBFAMILY MEMBER 3 PROTEIN"/>
    <property type="match status" value="1"/>
</dbReference>
<dbReference type="PANTHER" id="PTHR12489">
    <property type="entry name" value="LIPOMA HMGIC FUSION PARTNER-LIKE PROTEIN"/>
    <property type="match status" value="1"/>
</dbReference>
<dbReference type="Pfam" id="PF10242">
    <property type="entry name" value="L_HMGIC_fpl"/>
    <property type="match status" value="1"/>
</dbReference>
<organism>
    <name type="scientific">Homo sapiens</name>
    <name type="common">Human</name>
    <dbReference type="NCBI Taxonomy" id="9606"/>
    <lineage>
        <taxon>Eukaryota</taxon>
        <taxon>Metazoa</taxon>
        <taxon>Chordata</taxon>
        <taxon>Craniata</taxon>
        <taxon>Vertebrata</taxon>
        <taxon>Euteleostomi</taxon>
        <taxon>Mammalia</taxon>
        <taxon>Eutheria</taxon>
        <taxon>Euarchontoglires</taxon>
        <taxon>Primates</taxon>
        <taxon>Haplorrhini</taxon>
        <taxon>Catarrhini</taxon>
        <taxon>Hominidae</taxon>
        <taxon>Homo</taxon>
    </lineage>
</organism>
<accession>Q86UP9</accession>
<accession>A1L383</accession>
<accession>A4D0Q5</accession>
<sequence length="236" mass="25769">MPGAAAAAAAAAAAMLPAQEAAKLYHTNYVRNSRAIGVLWAIFTICFAIVNVVCFIQPYWIGDGVDTPQAGYFGLFHYCIGNGFSRELTCRGSFTDFSTLPSGAFKAASFFIGLSMMLIIACIICFTLFFFCNTATVYKICAWMQLTSAACLVLGCMIFPDGWDSDEVKRMCGEKTDKYTLGACSVRWAYILAIIGILDALILSFLAFVLGNRQDSLMAEELKAENKVLLSQYSLE</sequence>